<feature type="initiator methionine" description="Removed" evidence="1">
    <location>
        <position position="1"/>
    </location>
</feature>
<feature type="chain" id="PRO_0000121150" description="Ras-related protein Rab-11A">
    <location>
        <begin position="2"/>
        <end position="213"/>
    </location>
</feature>
<feature type="propeptide" id="PRO_0000370806" description="Removed in mature form" evidence="5">
    <location>
        <begin position="214"/>
        <end position="216"/>
    </location>
</feature>
<feature type="region of interest" description="Disordered" evidence="6">
    <location>
        <begin position="183"/>
        <end position="211"/>
    </location>
</feature>
<feature type="short sequence motif" description="Switch 1" evidence="1">
    <location>
        <begin position="36"/>
        <end position="47"/>
    </location>
</feature>
<feature type="short sequence motif" description="Switch 2" evidence="1">
    <location>
        <begin position="67"/>
        <end position="86"/>
    </location>
</feature>
<feature type="binding site" evidence="1">
    <location>
        <position position="20"/>
    </location>
    <ligand>
        <name>GTP</name>
        <dbReference type="ChEBI" id="CHEBI:37565"/>
    </ligand>
</feature>
<feature type="binding site" evidence="1">
    <location>
        <position position="21"/>
    </location>
    <ligand>
        <name>GTP</name>
        <dbReference type="ChEBI" id="CHEBI:37565"/>
    </ligand>
</feature>
<feature type="binding site" evidence="1">
    <location>
        <position position="22"/>
    </location>
    <ligand>
        <name>GTP</name>
        <dbReference type="ChEBI" id="CHEBI:37565"/>
    </ligand>
</feature>
<feature type="binding site" evidence="1">
    <location>
        <position position="23"/>
    </location>
    <ligand>
        <name>GTP</name>
        <dbReference type="ChEBI" id="CHEBI:37565"/>
    </ligand>
</feature>
<feature type="binding site" evidence="1">
    <location>
        <position position="24"/>
    </location>
    <ligand>
        <name>GTP</name>
        <dbReference type="ChEBI" id="CHEBI:37565"/>
    </ligand>
</feature>
<feature type="binding site" evidence="1">
    <location>
        <position position="25"/>
    </location>
    <ligand>
        <name>GTP</name>
        <dbReference type="ChEBI" id="CHEBI:37565"/>
    </ligand>
</feature>
<feature type="binding site" evidence="1">
    <location>
        <position position="25"/>
    </location>
    <ligand>
        <name>Mg(2+)</name>
        <dbReference type="ChEBI" id="CHEBI:18420"/>
    </ligand>
</feature>
<feature type="binding site" evidence="1">
    <location>
        <position position="26"/>
    </location>
    <ligand>
        <name>GTP</name>
        <dbReference type="ChEBI" id="CHEBI:37565"/>
    </ligand>
</feature>
<feature type="binding site" evidence="1">
    <location>
        <position position="37"/>
    </location>
    <ligand>
        <name>GTP</name>
        <dbReference type="ChEBI" id="CHEBI:37565"/>
    </ligand>
</feature>
<feature type="binding site" evidence="1">
    <location>
        <position position="38"/>
    </location>
    <ligand>
        <name>GTP</name>
        <dbReference type="ChEBI" id="CHEBI:37565"/>
    </ligand>
</feature>
<feature type="binding site" evidence="1">
    <location>
        <position position="40"/>
    </location>
    <ligand>
        <name>GTP</name>
        <dbReference type="ChEBI" id="CHEBI:37565"/>
    </ligand>
</feature>
<feature type="binding site" evidence="1">
    <location>
        <position position="42"/>
    </location>
    <ligand>
        <name>GTP</name>
        <dbReference type="ChEBI" id="CHEBI:37565"/>
    </ligand>
</feature>
<feature type="binding site" evidence="1">
    <location>
        <position position="43"/>
    </location>
    <ligand>
        <name>GTP</name>
        <dbReference type="ChEBI" id="CHEBI:37565"/>
    </ligand>
</feature>
<feature type="binding site" evidence="1">
    <location>
        <position position="43"/>
    </location>
    <ligand>
        <name>Mg(2+)</name>
        <dbReference type="ChEBI" id="CHEBI:18420"/>
    </ligand>
</feature>
<feature type="binding site" evidence="1">
    <location>
        <position position="66"/>
    </location>
    <ligand>
        <name>Mg(2+)</name>
        <dbReference type="ChEBI" id="CHEBI:18420"/>
    </ligand>
</feature>
<feature type="binding site" evidence="1">
    <location>
        <position position="69"/>
    </location>
    <ligand>
        <name>GTP</name>
        <dbReference type="ChEBI" id="CHEBI:37565"/>
    </ligand>
</feature>
<feature type="binding site" evidence="1">
    <location>
        <position position="124"/>
    </location>
    <ligand>
        <name>GTP</name>
        <dbReference type="ChEBI" id="CHEBI:37565"/>
    </ligand>
</feature>
<feature type="binding site" evidence="1">
    <location>
        <position position="125"/>
    </location>
    <ligand>
        <name>GTP</name>
        <dbReference type="ChEBI" id="CHEBI:37565"/>
    </ligand>
</feature>
<feature type="binding site" evidence="1">
    <location>
        <position position="127"/>
    </location>
    <ligand>
        <name>GTP</name>
        <dbReference type="ChEBI" id="CHEBI:37565"/>
    </ligand>
</feature>
<feature type="binding site" evidence="1">
    <location>
        <position position="155"/>
    </location>
    <ligand>
        <name>GTP</name>
        <dbReference type="ChEBI" id="CHEBI:37565"/>
    </ligand>
</feature>
<feature type="binding site" evidence="1">
    <location>
        <position position="156"/>
    </location>
    <ligand>
        <name>GTP</name>
        <dbReference type="ChEBI" id="CHEBI:37565"/>
    </ligand>
</feature>
<feature type="modified residue" description="N-acetylglycine" evidence="1">
    <location>
        <position position="2"/>
    </location>
</feature>
<feature type="modified residue" description="Cysteine methyl ester" evidence="5">
    <location>
        <position position="213"/>
    </location>
</feature>
<feature type="lipid moiety-binding region" description="S-geranylgeranyl cysteine" evidence="1">
    <location>
        <position position="212"/>
    </location>
</feature>
<feature type="lipid moiety-binding region" description="S-geranylgeranyl cysteine" evidence="1">
    <location>
        <position position="213"/>
    </location>
</feature>
<proteinExistence type="evidence at transcript level"/>
<name>RB11A_CANLF</name>
<protein>
    <recommendedName>
        <fullName evidence="2">Ras-related protein Rab-11A</fullName>
        <shortName evidence="2">Rab-11</shortName>
        <ecNumber evidence="3">3.6.5.2</ecNumber>
    </recommendedName>
</protein>
<dbReference type="EC" id="3.6.5.2" evidence="3"/>
<dbReference type="EMBL" id="X56388">
    <property type="protein sequence ID" value="CAA39799.1"/>
    <property type="molecule type" value="mRNA"/>
</dbReference>
<dbReference type="PIR" id="E36364">
    <property type="entry name" value="E36364"/>
</dbReference>
<dbReference type="RefSeq" id="NP_001003276.1">
    <property type="nucleotide sequence ID" value="NM_001003276.3"/>
</dbReference>
<dbReference type="SMR" id="P62490"/>
<dbReference type="FunCoup" id="P62490">
    <property type="interactions" value="2643"/>
</dbReference>
<dbReference type="IntAct" id="P62490">
    <property type="interactions" value="3"/>
</dbReference>
<dbReference type="MINT" id="P62490"/>
<dbReference type="STRING" id="9615.ENSCAFP00000025408"/>
<dbReference type="PaxDb" id="9612-ENSCAFP00000025408"/>
<dbReference type="Ensembl" id="ENSCAFT00000107529.1">
    <property type="protein sequence ID" value="ENSCAFP00000067272.1"/>
    <property type="gene ID" value="ENSCAFG00000055546.1"/>
</dbReference>
<dbReference type="Ensembl" id="ENSCAFT00845048180.1">
    <property type="protein sequence ID" value="ENSCAFP00845037792.1"/>
    <property type="gene ID" value="ENSCAFG00845027320.1"/>
</dbReference>
<dbReference type="GeneID" id="403957"/>
<dbReference type="KEGG" id="cfa:403957"/>
<dbReference type="CTD" id="8766"/>
<dbReference type="VEuPathDB" id="HostDB:ENSCAFG00845027320"/>
<dbReference type="eggNOG" id="KOG0087">
    <property type="taxonomic scope" value="Eukaryota"/>
</dbReference>
<dbReference type="GeneTree" id="ENSGT00940000154914"/>
<dbReference type="HOGENOM" id="CLU_041217_23_0_1"/>
<dbReference type="InParanoid" id="P62490"/>
<dbReference type="OMA" id="ITAIYQM"/>
<dbReference type="OrthoDB" id="9989112at2759"/>
<dbReference type="TreeFam" id="TF300099"/>
<dbReference type="Reactome" id="R-CFA-432040">
    <property type="pathway name" value="Vasopressin regulates renal water homeostasis via Aquaporins"/>
</dbReference>
<dbReference type="Reactome" id="R-CFA-5620912">
    <property type="pathway name" value="Anchoring of the basal body to the plasma membrane"/>
</dbReference>
<dbReference type="Reactome" id="R-CFA-5620916">
    <property type="pathway name" value="VxPx cargo-targeting to cilium"/>
</dbReference>
<dbReference type="Reactome" id="R-CFA-8873719">
    <property type="pathway name" value="RAB geranylgeranylation"/>
</dbReference>
<dbReference type="Proteomes" id="UP000002254">
    <property type="component" value="Chromosome 30"/>
</dbReference>
<dbReference type="Proteomes" id="UP000694429">
    <property type="component" value="Unplaced"/>
</dbReference>
<dbReference type="Proteomes" id="UP000694542">
    <property type="component" value="Unplaced"/>
</dbReference>
<dbReference type="Proteomes" id="UP000805418">
    <property type="component" value="Chromosome 30"/>
</dbReference>
<dbReference type="Bgee" id="ENSCAFG00000017255">
    <property type="expression patterns" value="Expressed in mucosa of urinary bladder and 48 other cell types or tissues"/>
</dbReference>
<dbReference type="GO" id="GO:0005814">
    <property type="term" value="C:centriole"/>
    <property type="evidence" value="ECO:0007669"/>
    <property type="project" value="Ensembl"/>
</dbReference>
<dbReference type="GO" id="GO:0005813">
    <property type="term" value="C:centrosome"/>
    <property type="evidence" value="ECO:0000250"/>
    <property type="project" value="UniProtKB"/>
</dbReference>
<dbReference type="GO" id="GO:0032154">
    <property type="term" value="C:cleavage furrow"/>
    <property type="evidence" value="ECO:0000250"/>
    <property type="project" value="UniProtKB"/>
</dbReference>
<dbReference type="GO" id="GO:0030666">
    <property type="term" value="C:endocytic vesicle membrane"/>
    <property type="evidence" value="ECO:0000250"/>
    <property type="project" value="UniProtKB"/>
</dbReference>
<dbReference type="GO" id="GO:0070382">
    <property type="term" value="C:exocytic vesicle"/>
    <property type="evidence" value="ECO:0000314"/>
    <property type="project" value="CAFA"/>
</dbReference>
<dbReference type="GO" id="GO:0070062">
    <property type="term" value="C:extracellular exosome"/>
    <property type="evidence" value="ECO:0007669"/>
    <property type="project" value="Ensembl"/>
</dbReference>
<dbReference type="GO" id="GO:0098978">
    <property type="term" value="C:glutamatergic synapse"/>
    <property type="evidence" value="ECO:0007669"/>
    <property type="project" value="Ensembl"/>
</dbReference>
<dbReference type="GO" id="GO:0005794">
    <property type="term" value="C:Golgi apparatus"/>
    <property type="evidence" value="ECO:0000318"/>
    <property type="project" value="GO_Central"/>
</dbReference>
<dbReference type="GO" id="GO:0000139">
    <property type="term" value="C:Golgi membrane"/>
    <property type="evidence" value="ECO:0000250"/>
    <property type="project" value="UniProtKB"/>
</dbReference>
<dbReference type="GO" id="GO:0005828">
    <property type="term" value="C:kinetochore microtubule"/>
    <property type="evidence" value="ECO:0007669"/>
    <property type="project" value="Ensembl"/>
</dbReference>
<dbReference type="GO" id="GO:0005771">
    <property type="term" value="C:multivesicular body"/>
    <property type="evidence" value="ECO:0007669"/>
    <property type="project" value="Ensembl"/>
</dbReference>
<dbReference type="GO" id="GO:0048471">
    <property type="term" value="C:perinuclear region of cytoplasm"/>
    <property type="evidence" value="ECO:0000315"/>
    <property type="project" value="CAFA"/>
</dbReference>
<dbReference type="GO" id="GO:0045335">
    <property type="term" value="C:phagocytic vesicle"/>
    <property type="evidence" value="ECO:0000250"/>
    <property type="project" value="UniProtKB"/>
</dbReference>
<dbReference type="GO" id="GO:0098837">
    <property type="term" value="C:postsynaptic recycling endosome"/>
    <property type="evidence" value="ECO:0000318"/>
    <property type="project" value="GO_Central"/>
</dbReference>
<dbReference type="GO" id="GO:0032991">
    <property type="term" value="C:protein-containing complex"/>
    <property type="evidence" value="ECO:0007669"/>
    <property type="project" value="Ensembl"/>
</dbReference>
<dbReference type="GO" id="GO:0055037">
    <property type="term" value="C:recycling endosome"/>
    <property type="evidence" value="ECO:0000315"/>
    <property type="project" value="CAFA"/>
</dbReference>
<dbReference type="GO" id="GO:0055038">
    <property type="term" value="C:recycling endosome membrane"/>
    <property type="evidence" value="ECO:0007669"/>
    <property type="project" value="UniProtKB-SubCell"/>
</dbReference>
<dbReference type="GO" id="GO:0000922">
    <property type="term" value="C:spindle pole"/>
    <property type="evidence" value="ECO:0007669"/>
    <property type="project" value="Ensembl"/>
</dbReference>
<dbReference type="GO" id="GO:0032588">
    <property type="term" value="C:trans-Golgi network membrane"/>
    <property type="evidence" value="ECO:0000250"/>
    <property type="project" value="UniProtKB"/>
</dbReference>
<dbReference type="GO" id="GO:0030133">
    <property type="term" value="C:transport vesicle"/>
    <property type="evidence" value="ECO:0000318"/>
    <property type="project" value="GO_Central"/>
</dbReference>
<dbReference type="GO" id="GO:0051959">
    <property type="term" value="F:dynein light intermediate chain binding"/>
    <property type="evidence" value="ECO:0000250"/>
    <property type="project" value="UniProtKB"/>
</dbReference>
<dbReference type="GO" id="GO:0003925">
    <property type="term" value="F:G protein activity"/>
    <property type="evidence" value="ECO:0007669"/>
    <property type="project" value="UniProtKB-EC"/>
</dbReference>
<dbReference type="GO" id="GO:0005525">
    <property type="term" value="F:GTP binding"/>
    <property type="evidence" value="ECO:0000318"/>
    <property type="project" value="GO_Central"/>
</dbReference>
<dbReference type="GO" id="GO:0003924">
    <property type="term" value="F:GTPase activity"/>
    <property type="evidence" value="ECO:0000250"/>
    <property type="project" value="UniProtKB"/>
</dbReference>
<dbReference type="GO" id="GO:0008017">
    <property type="term" value="F:microtubule binding"/>
    <property type="evidence" value="ECO:0007669"/>
    <property type="project" value="Ensembl"/>
</dbReference>
<dbReference type="GO" id="GO:0031489">
    <property type="term" value="F:myosin V binding"/>
    <property type="evidence" value="ECO:0007669"/>
    <property type="project" value="Ensembl"/>
</dbReference>
<dbReference type="GO" id="GO:0019904">
    <property type="term" value="F:protein domain specific binding"/>
    <property type="evidence" value="ECO:0000353"/>
    <property type="project" value="CAFA"/>
</dbReference>
<dbReference type="GO" id="GO:0150093">
    <property type="term" value="P:amyloid-beta clearance by transcytosis"/>
    <property type="evidence" value="ECO:0007669"/>
    <property type="project" value="Ensembl"/>
</dbReference>
<dbReference type="GO" id="GO:0030953">
    <property type="term" value="P:astral microtubule organization"/>
    <property type="evidence" value="ECO:0007669"/>
    <property type="project" value="Ensembl"/>
</dbReference>
<dbReference type="GO" id="GO:0061502">
    <property type="term" value="P:early endosome to recycling endosome transport"/>
    <property type="evidence" value="ECO:0007669"/>
    <property type="project" value="Ensembl"/>
</dbReference>
<dbReference type="GO" id="GO:0072594">
    <property type="term" value="P:establishment of protein localization to organelle"/>
    <property type="evidence" value="ECO:0007669"/>
    <property type="project" value="Ensembl"/>
</dbReference>
<dbReference type="GO" id="GO:0006887">
    <property type="term" value="P:exocytosis"/>
    <property type="evidence" value="ECO:0000318"/>
    <property type="project" value="GO_Central"/>
</dbReference>
<dbReference type="GO" id="GO:1990182">
    <property type="term" value="P:exosomal secretion"/>
    <property type="evidence" value="ECO:0007669"/>
    <property type="project" value="Ensembl"/>
</dbReference>
<dbReference type="GO" id="GO:0032402">
    <property type="term" value="P:melanosome transport"/>
    <property type="evidence" value="ECO:0000250"/>
    <property type="project" value="UniProtKB"/>
</dbReference>
<dbReference type="GO" id="GO:0007080">
    <property type="term" value="P:mitotic metaphase chromosome alignment"/>
    <property type="evidence" value="ECO:0007669"/>
    <property type="project" value="Ensembl"/>
</dbReference>
<dbReference type="GO" id="GO:0090307">
    <property type="term" value="P:mitotic spindle assembly"/>
    <property type="evidence" value="ECO:0007669"/>
    <property type="project" value="Ensembl"/>
</dbReference>
<dbReference type="GO" id="GO:0036258">
    <property type="term" value="P:multivesicular body assembly"/>
    <property type="evidence" value="ECO:0007669"/>
    <property type="project" value="Ensembl"/>
</dbReference>
<dbReference type="GO" id="GO:0031175">
    <property type="term" value="P:neuron projection development"/>
    <property type="evidence" value="ECO:0000250"/>
    <property type="project" value="UniProtKB"/>
</dbReference>
<dbReference type="GO" id="GO:0098887">
    <property type="term" value="P:neurotransmitter receptor transport, endosome to postsynaptic membrane"/>
    <property type="evidence" value="ECO:0000318"/>
    <property type="project" value="GO_Central"/>
</dbReference>
<dbReference type="GO" id="GO:0010634">
    <property type="term" value="P:positive regulation of epithelial cell migration"/>
    <property type="evidence" value="ECO:0007669"/>
    <property type="project" value="Ensembl"/>
</dbReference>
<dbReference type="GO" id="GO:0010971">
    <property type="term" value="P:positive regulation of G2/M transition of mitotic cell cycle"/>
    <property type="evidence" value="ECO:0007669"/>
    <property type="project" value="Ensembl"/>
</dbReference>
<dbReference type="GO" id="GO:1903438">
    <property type="term" value="P:positive regulation of mitotic cytokinetic process"/>
    <property type="evidence" value="ECO:0007669"/>
    <property type="project" value="Ensembl"/>
</dbReference>
<dbReference type="GO" id="GO:0034394">
    <property type="term" value="P:protein localization to cell surface"/>
    <property type="evidence" value="ECO:0007669"/>
    <property type="project" value="Ensembl"/>
</dbReference>
<dbReference type="GO" id="GO:0061512">
    <property type="term" value="P:protein localization to cilium"/>
    <property type="evidence" value="ECO:0000250"/>
    <property type="project" value="UniProtKB"/>
</dbReference>
<dbReference type="GO" id="GO:0072659">
    <property type="term" value="P:protein localization to plasma membrane"/>
    <property type="evidence" value="ECO:0000250"/>
    <property type="project" value="UniProtKB"/>
</dbReference>
<dbReference type="GO" id="GO:0071806">
    <property type="term" value="P:protein transmembrane transport"/>
    <property type="evidence" value="ECO:0007669"/>
    <property type="project" value="Ensembl"/>
</dbReference>
<dbReference type="GO" id="GO:1902017">
    <property type="term" value="P:regulation of cilium assembly"/>
    <property type="evidence" value="ECO:0000250"/>
    <property type="project" value="UniProtKB"/>
</dbReference>
<dbReference type="GO" id="GO:1902954">
    <property type="term" value="P:regulation of early endosome to recycling endosome transport"/>
    <property type="evidence" value="ECO:0000250"/>
    <property type="project" value="UniProtKB"/>
</dbReference>
<dbReference type="GO" id="GO:2001135">
    <property type="term" value="P:regulation of endocytic recycling"/>
    <property type="evidence" value="ECO:0000250"/>
    <property type="project" value="UniProtKB"/>
</dbReference>
<dbReference type="GO" id="GO:1904779">
    <property type="term" value="P:regulation of protein localization to centrosome"/>
    <property type="evidence" value="ECO:0000250"/>
    <property type="project" value="UniProtKB"/>
</dbReference>
<dbReference type="CDD" id="cd01868">
    <property type="entry name" value="Rab11_like"/>
    <property type="match status" value="1"/>
</dbReference>
<dbReference type="FunFam" id="3.40.50.300:FF:000085">
    <property type="entry name" value="Putative ras-related protein rab-11a"/>
    <property type="match status" value="1"/>
</dbReference>
<dbReference type="Gene3D" id="3.40.50.300">
    <property type="entry name" value="P-loop containing nucleotide triphosphate hydrolases"/>
    <property type="match status" value="1"/>
</dbReference>
<dbReference type="InterPro" id="IPR027417">
    <property type="entry name" value="P-loop_NTPase"/>
</dbReference>
<dbReference type="InterPro" id="IPR050209">
    <property type="entry name" value="Rab_GTPases_membrane_traffic"/>
</dbReference>
<dbReference type="InterPro" id="IPR005225">
    <property type="entry name" value="Small_GTP-bd"/>
</dbReference>
<dbReference type="InterPro" id="IPR001806">
    <property type="entry name" value="Small_GTPase"/>
</dbReference>
<dbReference type="NCBIfam" id="TIGR00231">
    <property type="entry name" value="small_GTP"/>
    <property type="match status" value="1"/>
</dbReference>
<dbReference type="PANTHER" id="PTHR47979">
    <property type="entry name" value="DRAB11-RELATED"/>
    <property type="match status" value="1"/>
</dbReference>
<dbReference type="Pfam" id="PF00071">
    <property type="entry name" value="Ras"/>
    <property type="match status" value="1"/>
</dbReference>
<dbReference type="PRINTS" id="PR00449">
    <property type="entry name" value="RASTRNSFRMNG"/>
</dbReference>
<dbReference type="SMART" id="SM00175">
    <property type="entry name" value="RAB"/>
    <property type="match status" value="1"/>
</dbReference>
<dbReference type="SMART" id="SM00176">
    <property type="entry name" value="RAN"/>
    <property type="match status" value="1"/>
</dbReference>
<dbReference type="SMART" id="SM00173">
    <property type="entry name" value="RAS"/>
    <property type="match status" value="1"/>
</dbReference>
<dbReference type="SMART" id="SM00174">
    <property type="entry name" value="RHO"/>
    <property type="match status" value="1"/>
</dbReference>
<dbReference type="SUPFAM" id="SSF52540">
    <property type="entry name" value="P-loop containing nucleoside triphosphate hydrolases"/>
    <property type="match status" value="1"/>
</dbReference>
<dbReference type="PROSITE" id="PS51419">
    <property type="entry name" value="RAB"/>
    <property type="match status" value="1"/>
</dbReference>
<keyword id="KW-0007">Acetylation</keyword>
<keyword id="KW-0131">Cell cycle</keyword>
<keyword id="KW-1003">Cell membrane</keyword>
<keyword id="KW-0968">Cytoplasmic vesicle</keyword>
<keyword id="KW-0967">Endosome</keyword>
<keyword id="KW-0333">Golgi apparatus</keyword>
<keyword id="KW-0342">GTP-binding</keyword>
<keyword id="KW-0378">Hydrolase</keyword>
<keyword id="KW-0449">Lipoprotein</keyword>
<keyword id="KW-0460">Magnesium</keyword>
<keyword id="KW-0472">Membrane</keyword>
<keyword id="KW-0479">Metal-binding</keyword>
<keyword id="KW-0488">Methylation</keyword>
<keyword id="KW-0547">Nucleotide-binding</keyword>
<keyword id="KW-0636">Prenylation</keyword>
<keyword id="KW-0653">Protein transport</keyword>
<keyword id="KW-1185">Reference proteome</keyword>
<keyword id="KW-0813">Transport</keyword>
<comment type="function">
    <text evidence="1 2 7">The small GTPases Rab are key regulators of intracellular membrane trafficking, from the formation of transport vesicles to their fusion with membranes. Rabs cycle between an inactive GDP-bound form and an active GTP-bound form that is able to recruit to membranes different set of downstream effectors directly responsible for vesicle formation, movement, tethering and fusion. The small Rab GTPase RAB11A regulates endocytic recycling. Forms a functional Rab11/RAB11FIP3/dynein complex that regulates the movement of peripheral sorting endosomes (SE) along microtubule tracks toward the microtubule organizing center/centrosome, generating the endosomal recycling compartment (ERC). Acts as a major regulator of membrane delivery during cytokinesis. Together with MYO5B and RAB8A participates in epithelial cell polarization. Together with Rabin8/RAB3IP, RAB8A, the exocyst complex, PARD3, PRKCI, ANXA2, CDC42 and DNMBP promotes transcytosis of PODXL to the apical membrane initiation sites (AMIS), apical surface formation and lumenogenesis. Together with MYO5B participates in CFTR trafficking to the plasma membrane and TF (Transferrin) recycling in nonpolarized cells. Required in a complex with MYO5B and RAB11FIP2 for the transport of NPC1L1 to the plasma membrane. Participates in the sorting and basolateral transport of CDH1 from the Golgi apparatus to the plasma membrane (By similarity). Regulates the recycling of FCGRT (receptor of Fc region of monomeric IgG) to basolateral membranes (PubMed:19451275). May also play a role in melanosome transport and release from melanocytes (By similarity). Promotes Rabin8/RAB3IP preciliary vesicular trafficking to mother centriole by forming a ciliary targeting complex containing Rab11, ASAP1, Rabin8/RAB3IP, RAB11FIP3 and ARF4, thereby regulating ciliogenesis initiation. On the contrary, upon LPAR1 receptor signaling pathway activation, interaction with phosphorylated WDR44 prevents Rab11-RAB3IP-RAB11FIP3 complex formation and cilia growth. Participates in the export of a subset of neosynthesized proteins through a Rab8-Rab10-Rab11-endososomal dependent export route via interaction with WDR44 (By similarity).</text>
</comment>
<comment type="catalytic activity">
    <reaction evidence="3">
        <text>GTP + H2O = GDP + phosphate + H(+)</text>
        <dbReference type="Rhea" id="RHEA:19669"/>
        <dbReference type="ChEBI" id="CHEBI:15377"/>
        <dbReference type="ChEBI" id="CHEBI:15378"/>
        <dbReference type="ChEBI" id="CHEBI:37565"/>
        <dbReference type="ChEBI" id="CHEBI:43474"/>
        <dbReference type="ChEBI" id="CHEBI:58189"/>
        <dbReference type="EC" id="3.6.5.2"/>
    </reaction>
    <physiologicalReaction direction="left-to-right" evidence="3">
        <dbReference type="Rhea" id="RHEA:19670"/>
    </physiologicalReaction>
</comment>
<comment type="cofactor">
    <cofactor evidence="1">
        <name>Mg(2+)</name>
        <dbReference type="ChEBI" id="CHEBI:18420"/>
    </cofactor>
</comment>
<comment type="activity regulation">
    <text evidence="8">Regulated by guanine nucleotide exchange factors (GEFs) which promote the exchange of bound GDP for free GTP. Regulated by GTPase activating proteins (GAPs) which increase the GTP hydrolysis activity. Inhibited by GDP dissociation inhibitors (GDIs) which prevent Rab-GDP dissociation.</text>
</comment>
<comment type="subunit">
    <text evidence="1 2 4">Interacts (GTP-bound form) with RAB11FIPs (via their C-termini) including RAB11FIP1, RAB11FIP2, RAB11FIP3, RAB11FIP4 and RAB11FIP5 effectors (By similarity). Forms a complex with RAB11FIP3 and dynein intermediate chain DYNC1LI1; the interaction between RAB11A1 and RAB11FIP3 is direct; the complex regulates endocytic trafficking (By similarity). Interacts with EVI5; EVI5 and RAB11FIP3 may be mutually exclusive and compete for binding RAB11A (By similarity). Interacts with SGSM1, SGSM2, SGSM3 and VIPAS39 (By similarity). Interacts with EXOC6 in a GTP-dependent manner. Interacts with RAB11FIP5. Interacts with STXBP6. Interacts (GDP-bound form) with ZFYVE27 (By similarity). Interacts with BIRC6/bruce (By similarity). May interact with TBC1D14 (By similarity). Interacts with UNC119; in a cell cycle-dependent manner (By similarity). GDP-bound and nucleotide-free forms interact with SH3BP5 (By similarity). Interacts (GDP-bound form) with KIF5A in a ZFYVE27-dependent manner (By similarity). Interacts (GDP-bound form) with RELCH (By similarity). Found in a complex composed of RELCH, OSBP1 and RAB11A (By similarity). Interacts with TBC1D12 (By similarity). Interacts with DEF6 (By similarity). Interacts with ATP9A (By similarity). Forms a heterotetramer with RAB11FIP3; the GTP-bound form is preferred for binding. Forms a complex with Rabin8/RAB3IP and RAB11FIP3, probably a heterohexamer with two of each protein subunit, where Rabin8/RAB3IP and RAB11FIP3 simultaneously bind to RAB11A; the complex promotes preciliary trafficking and cilia growth. Forms a complex containing RAB11A, ASAP1, Rabin8/RAB3IP, RAP11FIP3 and ARF4; the complex promotes preciliary trafficking; the complex binds to RHO in photoreceptor cells and promotes RHO ciliary transport. Interacts (GTP-bound form) with WDR44; the interaction prevents RAB11A-RAB3IP-RAB11FIP3 complex formation (By similarity).</text>
</comment>
<comment type="subcellular location">
    <subcellularLocation>
        <location evidence="1">Cell membrane</location>
        <topology evidence="4">Lipid-anchor</topology>
    </subcellularLocation>
    <subcellularLocation>
        <location evidence="1">Endosome membrane</location>
    </subcellularLocation>
    <subcellularLocation>
        <location evidence="1">Recycling endosome membrane</location>
        <topology evidence="4">Lipid-anchor</topology>
    </subcellularLocation>
    <subcellularLocation>
        <location evidence="1">Cleavage furrow</location>
    </subcellularLocation>
    <subcellularLocation>
        <location evidence="1">Cytoplasmic vesicle</location>
        <location evidence="1">Phagosome</location>
    </subcellularLocation>
    <subcellularLocation>
        <location evidence="1">Cytoplasmic vesicle membrane</location>
    </subcellularLocation>
    <subcellularLocation>
        <location evidence="1">Golgi apparatus</location>
    </subcellularLocation>
    <subcellularLocation>
        <location evidence="1">Golgi apparatus</location>
        <location evidence="1">trans-Golgi network</location>
    </subcellularLocation>
    <subcellularLocation>
        <location evidence="1">Cytoplasmic vesicle</location>
    </subcellularLocation>
    <text evidence="1">Localized to WDR44-positive endosomes and tubules. Translocates with RAB11FIP2 from the vesicles of the endocytic recycling compartment (ERC) to the plasma membrane. Localizes to the cleavage furrow. During interphase, localized in vesicles continuously moving from peripheral sorting endosomes towards the pericentrosomal ERC. Colocalizes with PARD3, PRKCI, EXOC5, OCLN, PODXL and RAB8A in apical membrane initiation sites (AMIS) during the generation of apical surface and lumenogenesis. Localized to rhodopsin transport carriers when interacting with RAB11AFIP3 and ASAP1 in photoreceptors. Colocalizes with RAB11AFIP1 on punctate vesicles.</text>
</comment>
<comment type="domain">
    <text evidence="1">Switch 1, switch 2 and the interswitch regions are characteristic of Rab GTPases and mediate the interactions with Rab downstream effectors. The switch regions undergo conformational changes upon nucleotide binding which drives interaction with specific sets of effector proteins, with most effectors only binding to GTP-bound Rab.</text>
</comment>
<comment type="similarity">
    <text evidence="8">Belongs to the small GTPase superfamily. Rab family.</text>
</comment>
<reference key="1">
    <citation type="journal article" date="1990" name="Mol. Cell. Biol.">
        <title>Molecular cloning of YPT1/SEC4-related cDNAs from an epithelial cell line.</title>
        <authorList>
            <person name="Chavrier P."/>
            <person name="Vingron M."/>
            <person name="Sander C."/>
            <person name="Simons K."/>
            <person name="Zerial M."/>
        </authorList>
    </citation>
    <scope>NUCLEOTIDE SEQUENCE [MRNA]</scope>
    <source>
        <strain>Cocker spaniel</strain>
        <tissue>Kidney</tissue>
    </source>
</reference>
<reference key="2">
    <citation type="journal article" date="2009" name="J. Cell Biol.">
        <title>The recycling and transcytotic pathways for IgG transport by FcRn are distinct and display an inherent polarity.</title>
        <authorList>
            <person name="Tzaban S."/>
            <person name="Massol R.H."/>
            <person name="Yen E."/>
            <person name="Hamman W."/>
            <person name="Frank S.R."/>
            <person name="Lapierre L.A."/>
            <person name="Hansen S.H."/>
            <person name="Goldenring J.R."/>
            <person name="Blumberg R.S."/>
            <person name="Lencer W.I."/>
        </authorList>
    </citation>
    <scope>FUNCTION</scope>
</reference>
<gene>
    <name evidence="2" type="primary">RAB11A</name>
    <name evidence="2" type="synonym">RAB11</name>
</gene>
<evidence type="ECO:0000250" key="1">
    <source>
        <dbReference type="UniProtKB" id="P62491"/>
    </source>
</evidence>
<evidence type="ECO:0000250" key="2">
    <source>
        <dbReference type="UniProtKB" id="P62492"/>
    </source>
</evidence>
<evidence type="ECO:0000250" key="3">
    <source>
        <dbReference type="UniProtKB" id="P62493"/>
    </source>
</evidence>
<evidence type="ECO:0000250" key="4">
    <source>
        <dbReference type="UniProtKB" id="P62494"/>
    </source>
</evidence>
<evidence type="ECO:0000255" key="5"/>
<evidence type="ECO:0000256" key="6">
    <source>
        <dbReference type="SAM" id="MobiDB-lite"/>
    </source>
</evidence>
<evidence type="ECO:0000269" key="7">
    <source>
    </source>
</evidence>
<evidence type="ECO:0000305" key="8"/>
<accession>P62490</accession>
<accession>P24410</accession>
<accession>Q9JLX1</accession>
<organism>
    <name type="scientific">Canis lupus familiaris</name>
    <name type="common">Dog</name>
    <name type="synonym">Canis familiaris</name>
    <dbReference type="NCBI Taxonomy" id="9615"/>
    <lineage>
        <taxon>Eukaryota</taxon>
        <taxon>Metazoa</taxon>
        <taxon>Chordata</taxon>
        <taxon>Craniata</taxon>
        <taxon>Vertebrata</taxon>
        <taxon>Euteleostomi</taxon>
        <taxon>Mammalia</taxon>
        <taxon>Eutheria</taxon>
        <taxon>Laurasiatheria</taxon>
        <taxon>Carnivora</taxon>
        <taxon>Caniformia</taxon>
        <taxon>Canidae</taxon>
        <taxon>Canis</taxon>
    </lineage>
</organism>
<sequence>MGTRDDEYDYLFKVVLIGDSGVGKSNLLSRFTRNEFNLESKSTIGVEFATRSIQVDGKTIKAQIWDTAGQERYRAITSAYYRGAVGALLVYDIAKHLTYENVERWLKELRDHADSNIVIMLVGNKSDLRHLRAVPTDEARAFAEKNGLSFIETSALDSTNVEAAFQTILTEIYRIVSQKQMSDRRENDMSPSNNVVPIHVPPTTENKPKVQCCQNI</sequence>